<sequence>MKTGALATFLALCLPVTVFATTLRLSNEVDLLVLDGKKVSSSLLRGAESIELENGPHQLVFRVEKTIRLPGNEERLYISPPLVISFDTQLISQVNFQLPRLENEREASHFNAAPRLALLDGDAMPIPVKLDILAITSTAKVVDYEIETERYNKSAKRASLPQFATMMADDSTLLSDVSELDTVPPQSQTLTEQRLKYWFRLADPQTRHHFLQWAEKQPPS</sequence>
<organism>
    <name type="scientific">Salmonella paratyphi B (strain ATCC BAA-1250 / SPB7)</name>
    <dbReference type="NCBI Taxonomy" id="1016998"/>
    <lineage>
        <taxon>Bacteria</taxon>
        <taxon>Pseudomonadati</taxon>
        <taxon>Pseudomonadota</taxon>
        <taxon>Gammaproteobacteria</taxon>
        <taxon>Enterobacterales</taxon>
        <taxon>Enterobacteriaceae</taxon>
        <taxon>Salmonella</taxon>
    </lineage>
</organism>
<gene>
    <name evidence="1" type="primary">yccT</name>
    <name type="ordered locus">SPAB_02480</name>
</gene>
<dbReference type="EMBL" id="CP000886">
    <property type="protein sequence ID" value="ABX67860.1"/>
    <property type="molecule type" value="Genomic_DNA"/>
</dbReference>
<dbReference type="RefSeq" id="WP_000847719.1">
    <property type="nucleotide sequence ID" value="NC_010102.1"/>
</dbReference>
<dbReference type="KEGG" id="spq:SPAB_02480"/>
<dbReference type="PATRIC" id="fig|1016998.12.peg.2347"/>
<dbReference type="HOGENOM" id="CLU_073782_2_0_6"/>
<dbReference type="BioCyc" id="SENT1016998:SPAB_RS10080-MONOMER"/>
<dbReference type="Proteomes" id="UP000008556">
    <property type="component" value="Chromosome"/>
</dbReference>
<dbReference type="HAMAP" id="MF_00789">
    <property type="entry name" value="UPF0319"/>
    <property type="match status" value="1"/>
</dbReference>
<dbReference type="InterPro" id="IPR018635">
    <property type="entry name" value="UPF0319"/>
</dbReference>
<dbReference type="NCBIfam" id="NF047712">
    <property type="entry name" value="CrliSynInhib"/>
    <property type="match status" value="1"/>
</dbReference>
<dbReference type="NCBIfam" id="NF002967">
    <property type="entry name" value="PRK03641.1"/>
    <property type="match status" value="1"/>
</dbReference>
<dbReference type="PANTHER" id="PTHR38108">
    <property type="entry name" value="UPF0319 PROTEIN YCCT"/>
    <property type="match status" value="1"/>
</dbReference>
<dbReference type="PANTHER" id="PTHR38108:SF1">
    <property type="entry name" value="UPF0319 PROTEIN YCCT"/>
    <property type="match status" value="1"/>
</dbReference>
<dbReference type="Pfam" id="PF09829">
    <property type="entry name" value="DUF2057"/>
    <property type="match status" value="1"/>
</dbReference>
<reference key="1">
    <citation type="submission" date="2007-11" db="EMBL/GenBank/DDBJ databases">
        <authorList>
            <consortium name="The Salmonella enterica serovar Paratyphi B Genome Sequencing Project"/>
            <person name="McClelland M."/>
            <person name="Sanderson E.K."/>
            <person name="Porwollik S."/>
            <person name="Spieth J."/>
            <person name="Clifton W.S."/>
            <person name="Fulton R."/>
            <person name="Cordes M."/>
            <person name="Wollam A."/>
            <person name="Shah N."/>
            <person name="Pepin K."/>
            <person name="Bhonagiri V."/>
            <person name="Nash W."/>
            <person name="Johnson M."/>
            <person name="Thiruvilangam P."/>
            <person name="Wilson R."/>
        </authorList>
    </citation>
    <scope>NUCLEOTIDE SEQUENCE [LARGE SCALE GENOMIC DNA]</scope>
    <source>
        <strain>ATCC BAA-1250 / SPB7</strain>
    </source>
</reference>
<protein>
    <recommendedName>
        <fullName evidence="1">UPF0319 protein YccT</fullName>
    </recommendedName>
</protein>
<keyword id="KW-0732">Signal</keyword>
<proteinExistence type="inferred from homology"/>
<evidence type="ECO:0000255" key="1">
    <source>
        <dbReference type="HAMAP-Rule" id="MF_00789"/>
    </source>
</evidence>
<accession>A9N6W3</accession>
<comment type="similarity">
    <text evidence="1">Belongs to the UPF0319 family.</text>
</comment>
<name>YCCT_SALPB</name>
<feature type="signal peptide" evidence="1">
    <location>
        <begin position="1"/>
        <end position="20"/>
    </location>
</feature>
<feature type="chain" id="PRO_1000083601" description="UPF0319 protein YccT">
    <location>
        <begin position="21"/>
        <end position="220"/>
    </location>
</feature>